<dbReference type="EMBL" id="AE005174">
    <property type="protein sequence ID" value="AAG56484.1"/>
    <property type="molecule type" value="Genomic_DNA"/>
</dbReference>
<dbReference type="EMBL" id="BA000007">
    <property type="protein sequence ID" value="BAB35320.1"/>
    <property type="molecule type" value="Genomic_DNA"/>
</dbReference>
<dbReference type="PIR" id="A90866">
    <property type="entry name" value="A90866"/>
</dbReference>
<dbReference type="PIR" id="H85752">
    <property type="entry name" value="H85752"/>
</dbReference>
<dbReference type="RefSeq" id="NP_309924.1">
    <property type="nucleotide sequence ID" value="NC_002695.1"/>
</dbReference>
<dbReference type="RefSeq" id="WP_000057976.1">
    <property type="nucleotide sequence ID" value="NZ_VOAI01000015.1"/>
</dbReference>
<dbReference type="SMR" id="Q8X8K4"/>
<dbReference type="STRING" id="155864.Z2463"/>
<dbReference type="GeneID" id="912514"/>
<dbReference type="KEGG" id="ece:Z2463"/>
<dbReference type="KEGG" id="ecs:ECs_1897"/>
<dbReference type="PATRIC" id="fig|386585.9.peg.2002"/>
<dbReference type="eggNOG" id="COG3842">
    <property type="taxonomic scope" value="Bacteria"/>
</dbReference>
<dbReference type="HOGENOM" id="CLU_000604_1_1_6"/>
<dbReference type="OMA" id="SPKAFLM"/>
<dbReference type="Proteomes" id="UP000000558">
    <property type="component" value="Chromosome"/>
</dbReference>
<dbReference type="Proteomes" id="UP000002519">
    <property type="component" value="Chromosome"/>
</dbReference>
<dbReference type="GO" id="GO:0055052">
    <property type="term" value="C:ATP-binding cassette (ABC) transporter complex, substrate-binding subunit-containing"/>
    <property type="evidence" value="ECO:0007669"/>
    <property type="project" value="TreeGrafter"/>
</dbReference>
<dbReference type="GO" id="GO:0140359">
    <property type="term" value="F:ABC-type transporter activity"/>
    <property type="evidence" value="ECO:0007669"/>
    <property type="project" value="InterPro"/>
</dbReference>
<dbReference type="GO" id="GO:0005524">
    <property type="term" value="F:ATP binding"/>
    <property type="evidence" value="ECO:0007669"/>
    <property type="project" value="UniProtKB-KW"/>
</dbReference>
<dbReference type="GO" id="GO:0016887">
    <property type="term" value="F:ATP hydrolysis activity"/>
    <property type="evidence" value="ECO:0007669"/>
    <property type="project" value="InterPro"/>
</dbReference>
<dbReference type="GO" id="GO:0008643">
    <property type="term" value="P:carbohydrate transport"/>
    <property type="evidence" value="ECO:0007669"/>
    <property type="project" value="InterPro"/>
</dbReference>
<dbReference type="CDD" id="cd03301">
    <property type="entry name" value="ABC_MalK_N"/>
    <property type="match status" value="1"/>
</dbReference>
<dbReference type="FunFam" id="3.40.50.300:FF:000042">
    <property type="entry name" value="Maltose/maltodextrin ABC transporter, ATP-binding protein"/>
    <property type="match status" value="1"/>
</dbReference>
<dbReference type="Gene3D" id="2.40.50.100">
    <property type="match status" value="1"/>
</dbReference>
<dbReference type="Gene3D" id="2.40.50.140">
    <property type="entry name" value="Nucleic acid-binding proteins"/>
    <property type="match status" value="1"/>
</dbReference>
<dbReference type="Gene3D" id="3.40.50.300">
    <property type="entry name" value="P-loop containing nucleotide triphosphate hydrolases"/>
    <property type="match status" value="1"/>
</dbReference>
<dbReference type="InterPro" id="IPR003593">
    <property type="entry name" value="AAA+_ATPase"/>
</dbReference>
<dbReference type="InterPro" id="IPR003439">
    <property type="entry name" value="ABC_transporter-like_ATP-bd"/>
</dbReference>
<dbReference type="InterPro" id="IPR017871">
    <property type="entry name" value="ABC_transporter-like_CS"/>
</dbReference>
<dbReference type="InterPro" id="IPR015855">
    <property type="entry name" value="ABC_transpr_MalK-like"/>
</dbReference>
<dbReference type="InterPro" id="IPR047641">
    <property type="entry name" value="ABC_transpr_MalK/UgpC-like"/>
</dbReference>
<dbReference type="InterPro" id="IPR008995">
    <property type="entry name" value="Mo/tungstate-bd_C_term_dom"/>
</dbReference>
<dbReference type="InterPro" id="IPR012340">
    <property type="entry name" value="NA-bd_OB-fold"/>
</dbReference>
<dbReference type="InterPro" id="IPR040582">
    <property type="entry name" value="OB_MalK-like"/>
</dbReference>
<dbReference type="InterPro" id="IPR027417">
    <property type="entry name" value="P-loop_NTPase"/>
</dbReference>
<dbReference type="InterPro" id="IPR005116">
    <property type="entry name" value="Transp-assoc_OB_typ1"/>
</dbReference>
<dbReference type="NCBIfam" id="NF008653">
    <property type="entry name" value="PRK11650.1"/>
    <property type="match status" value="1"/>
</dbReference>
<dbReference type="PANTHER" id="PTHR43875">
    <property type="entry name" value="MALTODEXTRIN IMPORT ATP-BINDING PROTEIN MSMX"/>
    <property type="match status" value="1"/>
</dbReference>
<dbReference type="PANTHER" id="PTHR43875:SF1">
    <property type="entry name" value="OSMOPROTECTIVE COMPOUNDS UPTAKE ATP-BINDING PROTEIN GGTA"/>
    <property type="match status" value="1"/>
</dbReference>
<dbReference type="Pfam" id="PF00005">
    <property type="entry name" value="ABC_tran"/>
    <property type="match status" value="1"/>
</dbReference>
<dbReference type="Pfam" id="PF17912">
    <property type="entry name" value="OB_MalK"/>
    <property type="match status" value="1"/>
</dbReference>
<dbReference type="Pfam" id="PF03459">
    <property type="entry name" value="TOBE"/>
    <property type="match status" value="1"/>
</dbReference>
<dbReference type="SMART" id="SM00382">
    <property type="entry name" value="AAA"/>
    <property type="match status" value="1"/>
</dbReference>
<dbReference type="SUPFAM" id="SSF50331">
    <property type="entry name" value="MOP-like"/>
    <property type="match status" value="1"/>
</dbReference>
<dbReference type="SUPFAM" id="SSF52540">
    <property type="entry name" value="P-loop containing nucleoside triphosphate hydrolases"/>
    <property type="match status" value="1"/>
</dbReference>
<dbReference type="PROSITE" id="PS00211">
    <property type="entry name" value="ABC_TRANSPORTER_1"/>
    <property type="match status" value="1"/>
</dbReference>
<dbReference type="PROSITE" id="PS50893">
    <property type="entry name" value="ABC_TRANSPORTER_2"/>
    <property type="match status" value="1"/>
</dbReference>
<evidence type="ECO:0000255" key="1">
    <source>
        <dbReference type="PROSITE-ProRule" id="PRU00434"/>
    </source>
</evidence>
<evidence type="ECO:0000305" key="2"/>
<comment type="similarity">
    <text evidence="2">Belongs to the ABC transporter superfamily.</text>
</comment>
<reference key="1">
    <citation type="journal article" date="2001" name="Nature">
        <title>Genome sequence of enterohaemorrhagic Escherichia coli O157:H7.</title>
        <authorList>
            <person name="Perna N.T."/>
            <person name="Plunkett G. III"/>
            <person name="Burland V."/>
            <person name="Mau B."/>
            <person name="Glasner J.D."/>
            <person name="Rose D.J."/>
            <person name="Mayhew G.F."/>
            <person name="Evans P.S."/>
            <person name="Gregor J."/>
            <person name="Kirkpatrick H.A."/>
            <person name="Posfai G."/>
            <person name="Hackett J."/>
            <person name="Klink S."/>
            <person name="Boutin A."/>
            <person name="Shao Y."/>
            <person name="Miller L."/>
            <person name="Grotbeck E.J."/>
            <person name="Davis N.W."/>
            <person name="Lim A."/>
            <person name="Dimalanta E.T."/>
            <person name="Potamousis K."/>
            <person name="Apodaca J."/>
            <person name="Anantharaman T.S."/>
            <person name="Lin J."/>
            <person name="Yen G."/>
            <person name="Schwartz D.C."/>
            <person name="Welch R.A."/>
            <person name="Blattner F.R."/>
        </authorList>
    </citation>
    <scope>NUCLEOTIDE SEQUENCE [LARGE SCALE GENOMIC DNA]</scope>
    <source>
        <strain>O157:H7 / EDL933 / ATCC 700927 / EHEC</strain>
    </source>
</reference>
<reference key="2">
    <citation type="journal article" date="2001" name="DNA Res.">
        <title>Complete genome sequence of enterohemorrhagic Escherichia coli O157:H7 and genomic comparison with a laboratory strain K-12.</title>
        <authorList>
            <person name="Hayashi T."/>
            <person name="Makino K."/>
            <person name="Ohnishi M."/>
            <person name="Kurokawa K."/>
            <person name="Ishii K."/>
            <person name="Yokoyama K."/>
            <person name="Han C.-G."/>
            <person name="Ohtsubo E."/>
            <person name="Nakayama K."/>
            <person name="Murata T."/>
            <person name="Tanaka M."/>
            <person name="Tobe T."/>
            <person name="Iida T."/>
            <person name="Takami H."/>
            <person name="Honda T."/>
            <person name="Sasakawa C."/>
            <person name="Ogasawara N."/>
            <person name="Yasunaga T."/>
            <person name="Kuhara S."/>
            <person name="Shiba T."/>
            <person name="Hattori M."/>
            <person name="Shinagawa H."/>
        </authorList>
    </citation>
    <scope>NUCLEOTIDE SEQUENCE [LARGE SCALE GENOMIC DNA]</scope>
    <source>
        <strain>O157:H7 / Sakai / RIMD 0509952 / EHEC</strain>
    </source>
</reference>
<gene>
    <name type="primary">ycjV</name>
    <name type="ordered locus">Z2463</name>
    <name type="ordered locus">ECs1897</name>
</gene>
<keyword id="KW-0067">ATP-binding</keyword>
<keyword id="KW-0547">Nucleotide-binding</keyword>
<keyword id="KW-1185">Reference proteome</keyword>
<keyword id="KW-0813">Transport</keyword>
<protein>
    <recommendedName>
        <fullName>Uncharacterized ABC transporter ATP-binding protein YcjV</fullName>
    </recommendedName>
</protein>
<sequence length="360" mass="40177">MAQLSLQHIQKIYDNQVHVVKDFNLEIADKEFIVFVGPSGCGKSTTLRMIAGLEEISGGDLLIDGKRMNDVPAKARNIAMVFQNYALYPHMTVYDNMAFGLKMQKIAKEVIDERVNWAAQILGLREYLKRKPGALSGGQRQRVALGRAIVREAGVFLMDEPLSNLDAKLRVQMRAEISKLHQKLNTTMIYVTHDQTEAMTMATRIVIMKDGIVQQVGAPKTVYNQPANMFVAGFIGSPAMNFIRGTIDGDKFVTETLKLTIPEEKLAVLKTQESLHKPIVMGMRPEDIHPDAQEENNISAKISVVELTGAEFMLYTTVGGHELVVRAGALNDYHAGENITIHFDMTKCHFFDAETEIAIR</sequence>
<organism>
    <name type="scientific">Escherichia coli O157:H7</name>
    <dbReference type="NCBI Taxonomy" id="83334"/>
    <lineage>
        <taxon>Bacteria</taxon>
        <taxon>Pseudomonadati</taxon>
        <taxon>Pseudomonadota</taxon>
        <taxon>Gammaproteobacteria</taxon>
        <taxon>Enterobacterales</taxon>
        <taxon>Enterobacteriaceae</taxon>
        <taxon>Escherichia</taxon>
    </lineage>
</organism>
<name>YCJV_ECO57</name>
<proteinExistence type="inferred from homology"/>
<accession>Q8X8K4</accession>
<accession>Q7AEH3</accession>
<feature type="chain" id="PRO_0000263024" description="Uncharacterized ABC transporter ATP-binding protein YcjV">
    <location>
        <begin position="1"/>
        <end position="360"/>
    </location>
</feature>
<feature type="domain" description="ABC transporter" evidence="1">
    <location>
        <begin position="4"/>
        <end position="235"/>
    </location>
</feature>
<feature type="binding site" evidence="1">
    <location>
        <begin position="37"/>
        <end position="44"/>
    </location>
    <ligand>
        <name>ATP</name>
        <dbReference type="ChEBI" id="CHEBI:30616"/>
    </ligand>
</feature>